<gene>
    <name evidence="1" type="primary">CFD1</name>
    <name type="ORF">SNOG_11184</name>
    <name type="ORF">SNOG_11185</name>
    <name type="ORF">SNOG_11186</name>
</gene>
<name>CFD1_PHANO</name>
<protein>
    <recommendedName>
        <fullName evidence="1">Cytosolic Fe-S cluster assembly factor CFD1</fullName>
    </recommendedName>
    <alternativeName>
        <fullName evidence="1">Cytosolic Fe-S cluster-deficient protein 1</fullName>
    </alternativeName>
</protein>
<keyword id="KW-0004">4Fe-4S</keyword>
<keyword id="KW-0067">ATP-binding</keyword>
<keyword id="KW-0963">Cytoplasm</keyword>
<keyword id="KW-0408">Iron</keyword>
<keyword id="KW-0411">Iron-sulfur</keyword>
<keyword id="KW-0479">Metal-binding</keyword>
<keyword id="KW-0547">Nucleotide-binding</keyword>
<reference key="1">
    <citation type="journal article" date="2007" name="Plant Cell">
        <title>Dothideomycete-plant interactions illuminated by genome sequencing and EST analysis of the wheat pathogen Stagonospora nodorum.</title>
        <authorList>
            <person name="Hane J.K."/>
            <person name="Lowe R.G.T."/>
            <person name="Solomon P.S."/>
            <person name="Tan K.-C."/>
            <person name="Schoch C.L."/>
            <person name="Spatafora J.W."/>
            <person name="Crous P.W."/>
            <person name="Kodira C.D."/>
            <person name="Birren B.W."/>
            <person name="Galagan J.E."/>
            <person name="Torriani S.F.F."/>
            <person name="McDonald B.A."/>
            <person name="Oliver R.P."/>
        </authorList>
    </citation>
    <scope>NUCLEOTIDE SEQUENCE [LARGE SCALE GENOMIC DNA]</scope>
    <source>
        <strain>SN15 / ATCC MYA-4574 / FGSC 10173</strain>
    </source>
</reference>
<sequence>MPLDNVRNIVLVLSGKGGVGKSSITTQLALTLSLQGHTVGVLDIDLTGPSIPRFFGIEESKVRQAPGGWIPVDVHAQQTLSAHRLQKTAEGQEIGALSCMSLGFILPNRSDAVIWRGPKKTAMVRQFLTDVLWPKVDYLLIDTPPGTSDEHISLLETLLKNTSTTPHASLPYLAGAVVVTTPQAISISDVKKELNFCKKTGIRVLGVVENMAGFVCPNCSECTNVFSKGGGEVMARDFNVPFLGSVPIDPAFVQLVEEGTRPLYPEGTIMAGTDVSAAPNGKEAGSTTHGSRLLICE</sequence>
<organism>
    <name type="scientific">Phaeosphaeria nodorum (strain SN15 / ATCC MYA-4574 / FGSC 10173)</name>
    <name type="common">Glume blotch fungus</name>
    <name type="synonym">Parastagonospora nodorum</name>
    <dbReference type="NCBI Taxonomy" id="321614"/>
    <lineage>
        <taxon>Eukaryota</taxon>
        <taxon>Fungi</taxon>
        <taxon>Dikarya</taxon>
        <taxon>Ascomycota</taxon>
        <taxon>Pezizomycotina</taxon>
        <taxon>Dothideomycetes</taxon>
        <taxon>Pleosporomycetidae</taxon>
        <taxon>Pleosporales</taxon>
        <taxon>Pleosporineae</taxon>
        <taxon>Phaeosphaeriaceae</taxon>
        <taxon>Parastagonospora</taxon>
    </lineage>
</organism>
<proteinExistence type="inferred from homology"/>
<feature type="chain" id="PRO_0000278882" description="Cytosolic Fe-S cluster assembly factor CFD1">
    <location>
        <begin position="1"/>
        <end position="297"/>
    </location>
</feature>
<feature type="binding site" evidence="1">
    <location>
        <begin position="15"/>
        <end position="22"/>
    </location>
    <ligand>
        <name>ATP</name>
        <dbReference type="ChEBI" id="CHEBI:30616"/>
    </ligand>
</feature>
<feature type="binding site" evidence="1">
    <location>
        <position position="216"/>
    </location>
    <ligand>
        <name>[4Fe-4S] cluster</name>
        <dbReference type="ChEBI" id="CHEBI:49883"/>
        <note>ligand shared between dimeric partners</note>
    </ligand>
</feature>
<feature type="binding site" evidence="1">
    <location>
        <position position="219"/>
    </location>
    <ligand>
        <name>[4Fe-4S] cluster</name>
        <dbReference type="ChEBI" id="CHEBI:49883"/>
        <note>ligand shared between dimeric partners</note>
    </ligand>
</feature>
<dbReference type="EMBL" id="CH445342">
    <property type="protein sequence ID" value="EAT81685.2"/>
    <property type="status" value="ALT_SEQ"/>
    <property type="molecule type" value="Genomic_DNA"/>
</dbReference>
<dbReference type="RefSeq" id="XP_001801430.1">
    <property type="nucleotide sequence ID" value="XM_001801378.1"/>
</dbReference>
<dbReference type="SMR" id="Q0UAM9"/>
<dbReference type="FunCoup" id="Q0UAM9">
    <property type="interactions" value="135"/>
</dbReference>
<dbReference type="STRING" id="321614.Q0UAM9"/>
<dbReference type="GeneID" id="5978338"/>
<dbReference type="KEGG" id="pno:SNOG_11186"/>
<dbReference type="VEuPathDB" id="FungiDB:JI435_307560"/>
<dbReference type="eggNOG" id="KOG3022">
    <property type="taxonomic scope" value="Eukaryota"/>
</dbReference>
<dbReference type="InParanoid" id="Q0UAM9"/>
<dbReference type="OMA" id="WIPVFAD"/>
<dbReference type="Proteomes" id="UP000001055">
    <property type="component" value="Unassembled WGS sequence"/>
</dbReference>
<dbReference type="GO" id="GO:0005829">
    <property type="term" value="C:cytosol"/>
    <property type="evidence" value="ECO:0000318"/>
    <property type="project" value="GO_Central"/>
</dbReference>
<dbReference type="GO" id="GO:0051539">
    <property type="term" value="F:4 iron, 4 sulfur cluster binding"/>
    <property type="evidence" value="ECO:0007669"/>
    <property type="project" value="UniProtKB-UniRule"/>
</dbReference>
<dbReference type="GO" id="GO:0005524">
    <property type="term" value="F:ATP binding"/>
    <property type="evidence" value="ECO:0007669"/>
    <property type="project" value="UniProtKB-KW"/>
</dbReference>
<dbReference type="GO" id="GO:0140663">
    <property type="term" value="F:ATP-dependent FeS chaperone activity"/>
    <property type="evidence" value="ECO:0007669"/>
    <property type="project" value="InterPro"/>
</dbReference>
<dbReference type="GO" id="GO:0051536">
    <property type="term" value="F:iron-sulfur cluster binding"/>
    <property type="evidence" value="ECO:0000318"/>
    <property type="project" value="GO_Central"/>
</dbReference>
<dbReference type="GO" id="GO:0046872">
    <property type="term" value="F:metal ion binding"/>
    <property type="evidence" value="ECO:0007669"/>
    <property type="project" value="UniProtKB-KW"/>
</dbReference>
<dbReference type="GO" id="GO:0016226">
    <property type="term" value="P:iron-sulfur cluster assembly"/>
    <property type="evidence" value="ECO:0000318"/>
    <property type="project" value="GO_Central"/>
</dbReference>
<dbReference type="CDD" id="cd02037">
    <property type="entry name" value="Mrp_NBP35"/>
    <property type="match status" value="1"/>
</dbReference>
<dbReference type="FunFam" id="3.40.50.300:FF:001300">
    <property type="entry name" value="Cytosolic Fe-S cluster assembly factor CFD1"/>
    <property type="match status" value="1"/>
</dbReference>
<dbReference type="Gene3D" id="3.40.50.300">
    <property type="entry name" value="P-loop containing nucleotide triphosphate hydrolases"/>
    <property type="match status" value="1"/>
</dbReference>
<dbReference type="HAMAP" id="MF_02040">
    <property type="entry name" value="Mrp_NBP35"/>
    <property type="match status" value="1"/>
</dbReference>
<dbReference type="HAMAP" id="MF_03039">
    <property type="entry name" value="NUBP2"/>
    <property type="match status" value="1"/>
</dbReference>
<dbReference type="InterPro" id="IPR000808">
    <property type="entry name" value="Mrp-like_CS"/>
</dbReference>
<dbReference type="InterPro" id="IPR019591">
    <property type="entry name" value="Mrp/NBP35_ATP-bd"/>
</dbReference>
<dbReference type="InterPro" id="IPR028600">
    <property type="entry name" value="NUBP2/Cfd1_eukaryotes"/>
</dbReference>
<dbReference type="InterPro" id="IPR027417">
    <property type="entry name" value="P-loop_NTPase"/>
</dbReference>
<dbReference type="InterPro" id="IPR033756">
    <property type="entry name" value="YlxH/NBP35"/>
</dbReference>
<dbReference type="PANTHER" id="PTHR23264:SF19">
    <property type="entry name" value="CYTOSOLIC FE-S CLUSTER ASSEMBLY FACTOR NUBP2"/>
    <property type="match status" value="1"/>
</dbReference>
<dbReference type="PANTHER" id="PTHR23264">
    <property type="entry name" value="NUCLEOTIDE-BINDING PROTEIN NBP35 YEAST -RELATED"/>
    <property type="match status" value="1"/>
</dbReference>
<dbReference type="Pfam" id="PF10609">
    <property type="entry name" value="ParA"/>
    <property type="match status" value="1"/>
</dbReference>
<dbReference type="SUPFAM" id="SSF52540">
    <property type="entry name" value="P-loop containing nucleoside triphosphate hydrolases"/>
    <property type="match status" value="1"/>
</dbReference>
<dbReference type="PROSITE" id="PS01215">
    <property type="entry name" value="MRP"/>
    <property type="match status" value="1"/>
</dbReference>
<evidence type="ECO:0000255" key="1">
    <source>
        <dbReference type="HAMAP-Rule" id="MF_03039"/>
    </source>
</evidence>
<evidence type="ECO:0000305" key="2"/>
<accession>Q0UAM9</accession>
<accession>Q0UAM8</accession>
<comment type="function">
    <text evidence="1">Component of the cytosolic iron-sulfur (Fe/S) protein assembly (CIA) machinery. Required for maturation of extramitochondrial Fe-S proteins. The NBP35-CFD1 heterotetramer forms a Fe-S scaffold complex, mediating the de novo assembly of an Fe-S cluster and its transfer to target apoproteins.</text>
</comment>
<comment type="cofactor">
    <cofactor evidence="1">
        <name>[4Fe-4S] cluster</name>
        <dbReference type="ChEBI" id="CHEBI:49883"/>
    </cofactor>
    <text evidence="1">Binds 4 [4Fe-4S] clusters per heterotetramer. Contains two stable clusters in the N-termini of NBP35 and two labile, bridging clusters between subunits of the NBP35-CFD1 heterotetramer.</text>
</comment>
<comment type="subunit">
    <text evidence="1">Heterotetramer of 2 NBP35 and 2 CFD1 chains.</text>
</comment>
<comment type="subcellular location">
    <subcellularLocation>
        <location evidence="1">Cytoplasm</location>
    </subcellularLocation>
</comment>
<comment type="similarity">
    <text evidence="1">Belongs to the Mrp/NBP35 ATP-binding proteins family. NUBP2/CFD1 subfamily.</text>
</comment>
<comment type="sequence caution" evidence="2">
    <conflict type="erroneous gene model prediction">
        <sequence resource="EMBL-CDS" id="EAT81685"/>
    </conflict>
</comment>